<evidence type="ECO:0000255" key="1">
    <source>
        <dbReference type="HAMAP-Rule" id="MF_00318"/>
    </source>
</evidence>
<sequence>MAKIVDIKGREVLDSRGNPTVEADVLLDNGIIGSACAPSGASTGSREALELRDGDKSRYLGKGVLKAVANINGPIRDLLLGKDPIDQKALDQAMIKLDGTENKATLGANAILAVSLAAAKAAAQDQDLPLYAHIANLNGTPGVYSMPVPMMNIINGGEHADNNVDIQEFMVQPVGAKSFSEGLRMGTEIFHHLKAVLKARGLNTAVGDEGGFAPNLASNEDALKVISEAVANAGYTLGTDVTLALDCAASEFYEDGKYNLSGEGQVFTAEGFAEYLKGLTQRYPIISIEDGLDESDWAGWKILTDKIGEKVQLVGDDLFVTNTKILKEGIDKKIANSILIKFNQIGTLTETLEAIQMAKAAGYTAVISHRSGETEDSTIADLAVGTSAGQIKTGSLCRSDRVSKYNQLLRIEEQLNGKAKYNGRGEFRG</sequence>
<proteinExistence type="inferred from homology"/>
<gene>
    <name evidence="1" type="primary">eno</name>
    <name type="ordered locus">PFL_1196</name>
</gene>
<organism>
    <name type="scientific">Pseudomonas fluorescens (strain ATCC BAA-477 / NRRL B-23932 / Pf-5)</name>
    <dbReference type="NCBI Taxonomy" id="220664"/>
    <lineage>
        <taxon>Bacteria</taxon>
        <taxon>Pseudomonadati</taxon>
        <taxon>Pseudomonadota</taxon>
        <taxon>Gammaproteobacteria</taxon>
        <taxon>Pseudomonadales</taxon>
        <taxon>Pseudomonadaceae</taxon>
        <taxon>Pseudomonas</taxon>
    </lineage>
</organism>
<comment type="function">
    <text evidence="1">Catalyzes the reversible conversion of 2-phosphoglycerate (2-PG) into phosphoenolpyruvate (PEP). It is essential for the degradation of carbohydrates via glycolysis.</text>
</comment>
<comment type="catalytic activity">
    <reaction evidence="1">
        <text>(2R)-2-phosphoglycerate = phosphoenolpyruvate + H2O</text>
        <dbReference type="Rhea" id="RHEA:10164"/>
        <dbReference type="ChEBI" id="CHEBI:15377"/>
        <dbReference type="ChEBI" id="CHEBI:58289"/>
        <dbReference type="ChEBI" id="CHEBI:58702"/>
        <dbReference type="EC" id="4.2.1.11"/>
    </reaction>
</comment>
<comment type="cofactor">
    <cofactor evidence="1">
        <name>Mg(2+)</name>
        <dbReference type="ChEBI" id="CHEBI:18420"/>
    </cofactor>
    <text evidence="1">Binds a second Mg(2+) ion via substrate during catalysis.</text>
</comment>
<comment type="pathway">
    <text evidence="1">Carbohydrate degradation; glycolysis; pyruvate from D-glyceraldehyde 3-phosphate: step 4/5.</text>
</comment>
<comment type="subunit">
    <text evidence="1">Component of the RNA degradosome, a multiprotein complex involved in RNA processing and mRNA degradation.</text>
</comment>
<comment type="subcellular location">
    <subcellularLocation>
        <location evidence="1">Cytoplasm</location>
    </subcellularLocation>
    <subcellularLocation>
        <location evidence="1">Secreted</location>
    </subcellularLocation>
    <subcellularLocation>
        <location evidence="1">Cell surface</location>
    </subcellularLocation>
    <text evidence="1">Fractions of enolase are present in both the cytoplasm and on the cell surface.</text>
</comment>
<comment type="similarity">
    <text evidence="1">Belongs to the enolase family.</text>
</comment>
<keyword id="KW-0963">Cytoplasm</keyword>
<keyword id="KW-0324">Glycolysis</keyword>
<keyword id="KW-0456">Lyase</keyword>
<keyword id="KW-0460">Magnesium</keyword>
<keyword id="KW-0479">Metal-binding</keyword>
<keyword id="KW-0964">Secreted</keyword>
<accession>Q4KHF6</accession>
<feature type="chain" id="PRO_0000267076" description="Enolase">
    <location>
        <begin position="1"/>
        <end position="429"/>
    </location>
</feature>
<feature type="active site" description="Proton donor" evidence="1">
    <location>
        <position position="209"/>
    </location>
</feature>
<feature type="active site" description="Proton acceptor" evidence="1">
    <location>
        <position position="341"/>
    </location>
</feature>
<feature type="binding site" evidence="1">
    <location>
        <position position="167"/>
    </location>
    <ligand>
        <name>(2R)-2-phosphoglycerate</name>
        <dbReference type="ChEBI" id="CHEBI:58289"/>
    </ligand>
</feature>
<feature type="binding site" evidence="1">
    <location>
        <position position="246"/>
    </location>
    <ligand>
        <name>Mg(2+)</name>
        <dbReference type="ChEBI" id="CHEBI:18420"/>
    </ligand>
</feature>
<feature type="binding site" evidence="1">
    <location>
        <position position="289"/>
    </location>
    <ligand>
        <name>Mg(2+)</name>
        <dbReference type="ChEBI" id="CHEBI:18420"/>
    </ligand>
</feature>
<feature type="binding site" evidence="1">
    <location>
        <position position="316"/>
    </location>
    <ligand>
        <name>Mg(2+)</name>
        <dbReference type="ChEBI" id="CHEBI:18420"/>
    </ligand>
</feature>
<feature type="binding site" evidence="1">
    <location>
        <position position="341"/>
    </location>
    <ligand>
        <name>(2R)-2-phosphoglycerate</name>
        <dbReference type="ChEBI" id="CHEBI:58289"/>
    </ligand>
</feature>
<feature type="binding site" evidence="1">
    <location>
        <position position="370"/>
    </location>
    <ligand>
        <name>(2R)-2-phosphoglycerate</name>
        <dbReference type="ChEBI" id="CHEBI:58289"/>
    </ligand>
</feature>
<feature type="binding site" evidence="1">
    <location>
        <position position="371"/>
    </location>
    <ligand>
        <name>(2R)-2-phosphoglycerate</name>
        <dbReference type="ChEBI" id="CHEBI:58289"/>
    </ligand>
</feature>
<feature type="binding site" evidence="1">
    <location>
        <position position="392"/>
    </location>
    <ligand>
        <name>(2R)-2-phosphoglycerate</name>
        <dbReference type="ChEBI" id="CHEBI:58289"/>
    </ligand>
</feature>
<protein>
    <recommendedName>
        <fullName evidence="1">Enolase</fullName>
        <ecNumber evidence="1">4.2.1.11</ecNumber>
    </recommendedName>
    <alternativeName>
        <fullName evidence="1">2-phospho-D-glycerate hydro-lyase</fullName>
    </alternativeName>
    <alternativeName>
        <fullName evidence="1">2-phosphoglycerate dehydratase</fullName>
    </alternativeName>
</protein>
<reference key="1">
    <citation type="journal article" date="2005" name="Nat. Biotechnol.">
        <title>Complete genome sequence of the plant commensal Pseudomonas fluorescens Pf-5.</title>
        <authorList>
            <person name="Paulsen I.T."/>
            <person name="Press C.M."/>
            <person name="Ravel J."/>
            <person name="Kobayashi D.Y."/>
            <person name="Myers G.S.A."/>
            <person name="Mavrodi D.V."/>
            <person name="DeBoy R.T."/>
            <person name="Seshadri R."/>
            <person name="Ren Q."/>
            <person name="Madupu R."/>
            <person name="Dodson R.J."/>
            <person name="Durkin A.S."/>
            <person name="Brinkac L.M."/>
            <person name="Daugherty S.C."/>
            <person name="Sullivan S.A."/>
            <person name="Rosovitz M.J."/>
            <person name="Gwinn M.L."/>
            <person name="Zhou L."/>
            <person name="Schneider D.J."/>
            <person name="Cartinhour S.W."/>
            <person name="Nelson W.C."/>
            <person name="Weidman J."/>
            <person name="Watkins K."/>
            <person name="Tran K."/>
            <person name="Khouri H."/>
            <person name="Pierson E.A."/>
            <person name="Pierson L.S. III"/>
            <person name="Thomashow L.S."/>
            <person name="Loper J.E."/>
        </authorList>
    </citation>
    <scope>NUCLEOTIDE SEQUENCE [LARGE SCALE GENOMIC DNA]</scope>
    <source>
        <strain>ATCC BAA-477 / NRRL B-23932 / Pf-5</strain>
    </source>
</reference>
<name>ENO_PSEF5</name>
<dbReference type="EC" id="4.2.1.11" evidence="1"/>
<dbReference type="EMBL" id="CP000076">
    <property type="protein sequence ID" value="AAY90483.1"/>
    <property type="molecule type" value="Genomic_DNA"/>
</dbReference>
<dbReference type="RefSeq" id="WP_011059543.1">
    <property type="nucleotide sequence ID" value="NC_004129.6"/>
</dbReference>
<dbReference type="SMR" id="Q4KHF6"/>
<dbReference type="STRING" id="220664.PFL_1196"/>
<dbReference type="GeneID" id="57474200"/>
<dbReference type="KEGG" id="pfl:PFL_1196"/>
<dbReference type="PATRIC" id="fig|220664.5.peg.1228"/>
<dbReference type="eggNOG" id="COG0148">
    <property type="taxonomic scope" value="Bacteria"/>
</dbReference>
<dbReference type="HOGENOM" id="CLU_031223_2_1_6"/>
<dbReference type="UniPathway" id="UPA00109">
    <property type="reaction ID" value="UER00187"/>
</dbReference>
<dbReference type="Proteomes" id="UP000008540">
    <property type="component" value="Chromosome"/>
</dbReference>
<dbReference type="GO" id="GO:0009986">
    <property type="term" value="C:cell surface"/>
    <property type="evidence" value="ECO:0007669"/>
    <property type="project" value="UniProtKB-SubCell"/>
</dbReference>
<dbReference type="GO" id="GO:0005576">
    <property type="term" value="C:extracellular region"/>
    <property type="evidence" value="ECO:0007669"/>
    <property type="project" value="UniProtKB-SubCell"/>
</dbReference>
<dbReference type="GO" id="GO:0000015">
    <property type="term" value="C:phosphopyruvate hydratase complex"/>
    <property type="evidence" value="ECO:0007669"/>
    <property type="project" value="InterPro"/>
</dbReference>
<dbReference type="GO" id="GO:0000287">
    <property type="term" value="F:magnesium ion binding"/>
    <property type="evidence" value="ECO:0007669"/>
    <property type="project" value="UniProtKB-UniRule"/>
</dbReference>
<dbReference type="GO" id="GO:0004634">
    <property type="term" value="F:phosphopyruvate hydratase activity"/>
    <property type="evidence" value="ECO:0007669"/>
    <property type="project" value="UniProtKB-UniRule"/>
</dbReference>
<dbReference type="GO" id="GO:0006096">
    <property type="term" value="P:glycolytic process"/>
    <property type="evidence" value="ECO:0007669"/>
    <property type="project" value="UniProtKB-UniRule"/>
</dbReference>
<dbReference type="CDD" id="cd03313">
    <property type="entry name" value="enolase"/>
    <property type="match status" value="1"/>
</dbReference>
<dbReference type="FunFam" id="3.20.20.120:FF:000001">
    <property type="entry name" value="Enolase"/>
    <property type="match status" value="1"/>
</dbReference>
<dbReference type="FunFam" id="3.30.390.10:FF:000001">
    <property type="entry name" value="Enolase"/>
    <property type="match status" value="1"/>
</dbReference>
<dbReference type="Gene3D" id="3.20.20.120">
    <property type="entry name" value="Enolase-like C-terminal domain"/>
    <property type="match status" value="1"/>
</dbReference>
<dbReference type="Gene3D" id="3.30.390.10">
    <property type="entry name" value="Enolase-like, N-terminal domain"/>
    <property type="match status" value="1"/>
</dbReference>
<dbReference type="HAMAP" id="MF_00318">
    <property type="entry name" value="Enolase"/>
    <property type="match status" value="1"/>
</dbReference>
<dbReference type="InterPro" id="IPR000941">
    <property type="entry name" value="Enolase"/>
</dbReference>
<dbReference type="InterPro" id="IPR036849">
    <property type="entry name" value="Enolase-like_C_sf"/>
</dbReference>
<dbReference type="InterPro" id="IPR029017">
    <property type="entry name" value="Enolase-like_N"/>
</dbReference>
<dbReference type="InterPro" id="IPR020810">
    <property type="entry name" value="Enolase_C"/>
</dbReference>
<dbReference type="InterPro" id="IPR020809">
    <property type="entry name" value="Enolase_CS"/>
</dbReference>
<dbReference type="InterPro" id="IPR020811">
    <property type="entry name" value="Enolase_N"/>
</dbReference>
<dbReference type="NCBIfam" id="TIGR01060">
    <property type="entry name" value="eno"/>
    <property type="match status" value="1"/>
</dbReference>
<dbReference type="PANTHER" id="PTHR11902">
    <property type="entry name" value="ENOLASE"/>
    <property type="match status" value="1"/>
</dbReference>
<dbReference type="PANTHER" id="PTHR11902:SF1">
    <property type="entry name" value="ENOLASE"/>
    <property type="match status" value="1"/>
</dbReference>
<dbReference type="Pfam" id="PF00113">
    <property type="entry name" value="Enolase_C"/>
    <property type="match status" value="1"/>
</dbReference>
<dbReference type="Pfam" id="PF03952">
    <property type="entry name" value="Enolase_N"/>
    <property type="match status" value="1"/>
</dbReference>
<dbReference type="PIRSF" id="PIRSF001400">
    <property type="entry name" value="Enolase"/>
    <property type="match status" value="1"/>
</dbReference>
<dbReference type="PRINTS" id="PR00148">
    <property type="entry name" value="ENOLASE"/>
</dbReference>
<dbReference type="SFLD" id="SFLDF00002">
    <property type="entry name" value="enolase"/>
    <property type="match status" value="1"/>
</dbReference>
<dbReference type="SFLD" id="SFLDG00178">
    <property type="entry name" value="enolase"/>
    <property type="match status" value="1"/>
</dbReference>
<dbReference type="SMART" id="SM01192">
    <property type="entry name" value="Enolase_C"/>
    <property type="match status" value="1"/>
</dbReference>
<dbReference type="SMART" id="SM01193">
    <property type="entry name" value="Enolase_N"/>
    <property type="match status" value="1"/>
</dbReference>
<dbReference type="SUPFAM" id="SSF51604">
    <property type="entry name" value="Enolase C-terminal domain-like"/>
    <property type="match status" value="1"/>
</dbReference>
<dbReference type="SUPFAM" id="SSF54826">
    <property type="entry name" value="Enolase N-terminal domain-like"/>
    <property type="match status" value="1"/>
</dbReference>
<dbReference type="PROSITE" id="PS00164">
    <property type="entry name" value="ENOLASE"/>
    <property type="match status" value="1"/>
</dbReference>